<proteinExistence type="inferred from homology"/>
<keyword id="KW-1185">Reference proteome</keyword>
<keyword id="KW-0687">Ribonucleoprotein</keyword>
<keyword id="KW-0689">Ribosomal protein</keyword>
<keyword id="KW-0694">RNA-binding</keyword>
<keyword id="KW-0699">rRNA-binding</keyword>
<protein>
    <recommendedName>
        <fullName evidence="1">Small ribosomal subunit protein uS3</fullName>
    </recommendedName>
    <alternativeName>
        <fullName evidence="3">30S ribosomal protein S3</fullName>
    </alternativeName>
</protein>
<gene>
    <name evidence="1" type="primary">rpsC</name>
    <name type="ordered locus">Bcav_3137</name>
</gene>
<feature type="chain" id="PRO_1000214329" description="Small ribosomal subunit protein uS3">
    <location>
        <begin position="1"/>
        <end position="258"/>
    </location>
</feature>
<feature type="domain" description="KH type-2" evidence="1">
    <location>
        <begin position="43"/>
        <end position="111"/>
    </location>
</feature>
<feature type="region of interest" description="Disordered" evidence="2">
    <location>
        <begin position="217"/>
        <end position="258"/>
    </location>
</feature>
<feature type="compositionally biased region" description="Basic and acidic residues" evidence="2">
    <location>
        <begin position="229"/>
        <end position="241"/>
    </location>
</feature>
<feature type="compositionally biased region" description="Low complexity" evidence="2">
    <location>
        <begin position="242"/>
        <end position="258"/>
    </location>
</feature>
<sequence>MGQKVNPLGFRLGITTDHRSRWFADSTKPGQRYRDYVREDVQIRKLMSTGLERAGISKVEIERTRDRVRVDLHTARPGIVIGRRGAEADRLRSELEKLTGKQVQLNILEVKNPELDAQLVAQGIAEQLASRVAFRRAMRKGMQSAQRAGAKGVRVQCSGRLGGAEMSRSEFYREGRVPLHTLRANIDYGFFEARTTFGRIGVKVWIYKGDMTEREFAREQASAAPRARGRADRPRGRRDEGAAPQQAAAPAATTGTEA</sequence>
<dbReference type="EMBL" id="CP001618">
    <property type="protein sequence ID" value="ACQ81381.1"/>
    <property type="molecule type" value="Genomic_DNA"/>
</dbReference>
<dbReference type="RefSeq" id="WP_015883621.1">
    <property type="nucleotide sequence ID" value="NC_012669.1"/>
</dbReference>
<dbReference type="SMR" id="C5C0I5"/>
<dbReference type="STRING" id="471853.Bcav_3137"/>
<dbReference type="KEGG" id="bcv:Bcav_3137"/>
<dbReference type="eggNOG" id="COG0092">
    <property type="taxonomic scope" value="Bacteria"/>
</dbReference>
<dbReference type="HOGENOM" id="CLU_058591_0_2_11"/>
<dbReference type="OrthoDB" id="9806396at2"/>
<dbReference type="Proteomes" id="UP000007962">
    <property type="component" value="Chromosome"/>
</dbReference>
<dbReference type="GO" id="GO:0022627">
    <property type="term" value="C:cytosolic small ribosomal subunit"/>
    <property type="evidence" value="ECO:0007669"/>
    <property type="project" value="TreeGrafter"/>
</dbReference>
<dbReference type="GO" id="GO:0003729">
    <property type="term" value="F:mRNA binding"/>
    <property type="evidence" value="ECO:0007669"/>
    <property type="project" value="UniProtKB-UniRule"/>
</dbReference>
<dbReference type="GO" id="GO:0019843">
    <property type="term" value="F:rRNA binding"/>
    <property type="evidence" value="ECO:0007669"/>
    <property type="project" value="UniProtKB-UniRule"/>
</dbReference>
<dbReference type="GO" id="GO:0003735">
    <property type="term" value="F:structural constituent of ribosome"/>
    <property type="evidence" value="ECO:0007669"/>
    <property type="project" value="InterPro"/>
</dbReference>
<dbReference type="GO" id="GO:0006412">
    <property type="term" value="P:translation"/>
    <property type="evidence" value="ECO:0007669"/>
    <property type="project" value="UniProtKB-UniRule"/>
</dbReference>
<dbReference type="CDD" id="cd02412">
    <property type="entry name" value="KH-II_30S_S3"/>
    <property type="match status" value="1"/>
</dbReference>
<dbReference type="FunFam" id="3.30.1140.32:FF:000002">
    <property type="entry name" value="30S ribosomal protein S3"/>
    <property type="match status" value="1"/>
</dbReference>
<dbReference type="FunFam" id="3.30.300.20:FF:000001">
    <property type="entry name" value="30S ribosomal protein S3"/>
    <property type="match status" value="1"/>
</dbReference>
<dbReference type="Gene3D" id="3.30.300.20">
    <property type="match status" value="1"/>
</dbReference>
<dbReference type="Gene3D" id="3.30.1140.32">
    <property type="entry name" value="Ribosomal protein S3, C-terminal domain"/>
    <property type="match status" value="1"/>
</dbReference>
<dbReference type="HAMAP" id="MF_01309_B">
    <property type="entry name" value="Ribosomal_uS3_B"/>
    <property type="match status" value="1"/>
</dbReference>
<dbReference type="InterPro" id="IPR004087">
    <property type="entry name" value="KH_dom"/>
</dbReference>
<dbReference type="InterPro" id="IPR015946">
    <property type="entry name" value="KH_dom-like_a/b"/>
</dbReference>
<dbReference type="InterPro" id="IPR004044">
    <property type="entry name" value="KH_dom_type_2"/>
</dbReference>
<dbReference type="InterPro" id="IPR009019">
    <property type="entry name" value="KH_sf_prok-type"/>
</dbReference>
<dbReference type="InterPro" id="IPR036419">
    <property type="entry name" value="Ribosomal_S3_C_sf"/>
</dbReference>
<dbReference type="InterPro" id="IPR005704">
    <property type="entry name" value="Ribosomal_uS3_bac-typ"/>
</dbReference>
<dbReference type="InterPro" id="IPR001351">
    <property type="entry name" value="Ribosomal_uS3_C"/>
</dbReference>
<dbReference type="InterPro" id="IPR018280">
    <property type="entry name" value="Ribosomal_uS3_CS"/>
</dbReference>
<dbReference type="NCBIfam" id="TIGR01009">
    <property type="entry name" value="rpsC_bact"/>
    <property type="match status" value="1"/>
</dbReference>
<dbReference type="PANTHER" id="PTHR11760">
    <property type="entry name" value="30S/40S RIBOSOMAL PROTEIN S3"/>
    <property type="match status" value="1"/>
</dbReference>
<dbReference type="PANTHER" id="PTHR11760:SF19">
    <property type="entry name" value="SMALL RIBOSOMAL SUBUNIT PROTEIN US3C"/>
    <property type="match status" value="1"/>
</dbReference>
<dbReference type="Pfam" id="PF07650">
    <property type="entry name" value="KH_2"/>
    <property type="match status" value="1"/>
</dbReference>
<dbReference type="Pfam" id="PF00189">
    <property type="entry name" value="Ribosomal_S3_C"/>
    <property type="match status" value="1"/>
</dbReference>
<dbReference type="SMART" id="SM00322">
    <property type="entry name" value="KH"/>
    <property type="match status" value="1"/>
</dbReference>
<dbReference type="SUPFAM" id="SSF54814">
    <property type="entry name" value="Prokaryotic type KH domain (KH-domain type II)"/>
    <property type="match status" value="1"/>
</dbReference>
<dbReference type="SUPFAM" id="SSF54821">
    <property type="entry name" value="Ribosomal protein S3 C-terminal domain"/>
    <property type="match status" value="1"/>
</dbReference>
<dbReference type="PROSITE" id="PS50823">
    <property type="entry name" value="KH_TYPE_2"/>
    <property type="match status" value="1"/>
</dbReference>
<dbReference type="PROSITE" id="PS00548">
    <property type="entry name" value="RIBOSOMAL_S3"/>
    <property type="match status" value="1"/>
</dbReference>
<name>RS3_BEUC1</name>
<evidence type="ECO:0000255" key="1">
    <source>
        <dbReference type="HAMAP-Rule" id="MF_01309"/>
    </source>
</evidence>
<evidence type="ECO:0000256" key="2">
    <source>
        <dbReference type="SAM" id="MobiDB-lite"/>
    </source>
</evidence>
<evidence type="ECO:0000305" key="3"/>
<comment type="function">
    <text evidence="1">Binds the lower part of the 30S subunit head. Binds mRNA in the 70S ribosome, positioning it for translation.</text>
</comment>
<comment type="subunit">
    <text evidence="1">Part of the 30S ribosomal subunit. Forms a tight complex with proteins S10 and S14.</text>
</comment>
<comment type="similarity">
    <text evidence="1">Belongs to the universal ribosomal protein uS3 family.</text>
</comment>
<reference key="1">
    <citation type="journal article" date="2009" name="Stand. Genomic Sci.">
        <title>Complete genome sequence of Beutenbergia cavernae type strain (HKI 0122).</title>
        <authorList>
            <person name="Land M."/>
            <person name="Pukall R."/>
            <person name="Abt B."/>
            <person name="Goker M."/>
            <person name="Rohde M."/>
            <person name="Glavina Del Rio T."/>
            <person name="Tice H."/>
            <person name="Copeland A."/>
            <person name="Cheng J.F."/>
            <person name="Lucas S."/>
            <person name="Chen F."/>
            <person name="Nolan M."/>
            <person name="Bruce D."/>
            <person name="Goodwin L."/>
            <person name="Pitluck S."/>
            <person name="Ivanova N."/>
            <person name="Mavromatis K."/>
            <person name="Ovchinnikova G."/>
            <person name="Pati A."/>
            <person name="Chen A."/>
            <person name="Palaniappan K."/>
            <person name="Hauser L."/>
            <person name="Chang Y.J."/>
            <person name="Jefferies C.C."/>
            <person name="Saunders E."/>
            <person name="Brettin T."/>
            <person name="Detter J.C."/>
            <person name="Han C."/>
            <person name="Chain P."/>
            <person name="Bristow J."/>
            <person name="Eisen J.A."/>
            <person name="Markowitz V."/>
            <person name="Hugenholtz P."/>
            <person name="Kyrpides N.C."/>
            <person name="Klenk H.P."/>
            <person name="Lapidus A."/>
        </authorList>
    </citation>
    <scope>NUCLEOTIDE SEQUENCE [LARGE SCALE GENOMIC DNA]</scope>
    <source>
        <strain>ATCC BAA-8 / DSM 12333 / CCUG 43141 / JCM 11478 / NBRC 16432 / NCIMB 13614 / HKI 0122</strain>
    </source>
</reference>
<organism>
    <name type="scientific">Beutenbergia cavernae (strain ATCC BAA-8 / DSM 12333 / CCUG 43141 / JCM 11478 / NBRC 16432 / NCIMB 13614 / HKI 0122)</name>
    <dbReference type="NCBI Taxonomy" id="471853"/>
    <lineage>
        <taxon>Bacteria</taxon>
        <taxon>Bacillati</taxon>
        <taxon>Actinomycetota</taxon>
        <taxon>Actinomycetes</taxon>
        <taxon>Micrococcales</taxon>
        <taxon>Beutenbergiaceae</taxon>
        <taxon>Beutenbergia</taxon>
    </lineage>
</organism>
<accession>C5C0I5</accession>